<organism>
    <name type="scientific">Treponema denticola (strain ATCC 35405 / DSM 14222 / CIP 103919 / JCM 8153 / KCTC 15104)</name>
    <dbReference type="NCBI Taxonomy" id="243275"/>
    <lineage>
        <taxon>Bacteria</taxon>
        <taxon>Pseudomonadati</taxon>
        <taxon>Spirochaetota</taxon>
        <taxon>Spirochaetia</taxon>
        <taxon>Spirochaetales</taxon>
        <taxon>Treponemataceae</taxon>
        <taxon>Treponema</taxon>
    </lineage>
</organism>
<name>VATE_TREDE</name>
<comment type="function">
    <text evidence="1">Produces ATP from ADP in the presence of a proton gradient across the membrane.</text>
</comment>
<comment type="similarity">
    <text evidence="1">Belongs to the V-ATPase E subunit family.</text>
</comment>
<protein>
    <recommendedName>
        <fullName>V-type ATP synthase subunit E</fullName>
    </recommendedName>
    <alternativeName>
        <fullName evidence="1">V-ATPase subunit E</fullName>
    </alternativeName>
</protein>
<keyword id="KW-0066">ATP synthesis</keyword>
<keyword id="KW-0375">Hydrogen ion transport</keyword>
<keyword id="KW-0406">Ion transport</keyword>
<keyword id="KW-1185">Reference proteome</keyword>
<keyword id="KW-0813">Transport</keyword>
<evidence type="ECO:0000255" key="1">
    <source>
        <dbReference type="HAMAP-Rule" id="MF_00311"/>
    </source>
</evidence>
<proteinExistence type="inferred from homology"/>
<gene>
    <name evidence="1" type="primary">atpE</name>
    <name type="ordered locus">TDE_1381</name>
</gene>
<accession>Q73MX5</accession>
<dbReference type="EMBL" id="AE017226">
    <property type="protein sequence ID" value="AAS11898.1"/>
    <property type="molecule type" value="Genomic_DNA"/>
</dbReference>
<dbReference type="RefSeq" id="NP_971987.1">
    <property type="nucleotide sequence ID" value="NC_002967.9"/>
</dbReference>
<dbReference type="RefSeq" id="WP_002678965.1">
    <property type="nucleotide sequence ID" value="NC_002967.9"/>
</dbReference>
<dbReference type="SMR" id="Q73MX5"/>
<dbReference type="STRING" id="243275.TDE_1381"/>
<dbReference type="PaxDb" id="243275-TDE_1381"/>
<dbReference type="GeneID" id="2741142"/>
<dbReference type="KEGG" id="tde:TDE_1381"/>
<dbReference type="PATRIC" id="fig|243275.7.peg.1325"/>
<dbReference type="eggNOG" id="COG1390">
    <property type="taxonomic scope" value="Bacteria"/>
</dbReference>
<dbReference type="HOGENOM" id="CLU_105793_0_1_12"/>
<dbReference type="OrthoDB" id="1771105at2"/>
<dbReference type="Proteomes" id="UP000008212">
    <property type="component" value="Chromosome"/>
</dbReference>
<dbReference type="GO" id="GO:0033178">
    <property type="term" value="C:proton-transporting two-sector ATPase complex, catalytic domain"/>
    <property type="evidence" value="ECO:0007669"/>
    <property type="project" value="InterPro"/>
</dbReference>
<dbReference type="GO" id="GO:0005524">
    <property type="term" value="F:ATP binding"/>
    <property type="evidence" value="ECO:0007669"/>
    <property type="project" value="UniProtKB-UniRule"/>
</dbReference>
<dbReference type="GO" id="GO:0046933">
    <property type="term" value="F:proton-transporting ATP synthase activity, rotational mechanism"/>
    <property type="evidence" value="ECO:0007669"/>
    <property type="project" value="UniProtKB-UniRule"/>
</dbReference>
<dbReference type="GO" id="GO:0046961">
    <property type="term" value="F:proton-transporting ATPase activity, rotational mechanism"/>
    <property type="evidence" value="ECO:0007669"/>
    <property type="project" value="InterPro"/>
</dbReference>
<dbReference type="GO" id="GO:0042777">
    <property type="term" value="P:proton motive force-driven plasma membrane ATP synthesis"/>
    <property type="evidence" value="ECO:0007669"/>
    <property type="project" value="UniProtKB-UniRule"/>
</dbReference>
<dbReference type="Gene3D" id="3.30.2320.30">
    <property type="entry name" value="ATP synthase, E subunit, C-terminal"/>
    <property type="match status" value="1"/>
</dbReference>
<dbReference type="HAMAP" id="MF_00311">
    <property type="entry name" value="ATP_synth_E_arch"/>
    <property type="match status" value="1"/>
</dbReference>
<dbReference type="InterPro" id="IPR038495">
    <property type="entry name" value="ATPase_E_C"/>
</dbReference>
<dbReference type="InterPro" id="IPR002842">
    <property type="entry name" value="ATPase_V1_Esu"/>
</dbReference>
<dbReference type="NCBIfam" id="NF002424">
    <property type="entry name" value="PRK01558.1"/>
    <property type="match status" value="1"/>
</dbReference>
<dbReference type="Pfam" id="PF01991">
    <property type="entry name" value="vATP-synt_E"/>
    <property type="match status" value="1"/>
</dbReference>
<dbReference type="SUPFAM" id="SSF160527">
    <property type="entry name" value="V-type ATPase subunit E-like"/>
    <property type="match status" value="1"/>
</dbReference>
<reference key="1">
    <citation type="journal article" date="2004" name="Proc. Natl. Acad. Sci. U.S.A.">
        <title>Comparison of the genome of the oral pathogen Treponema denticola with other spirochete genomes.</title>
        <authorList>
            <person name="Seshadri R."/>
            <person name="Myers G.S.A."/>
            <person name="Tettelin H."/>
            <person name="Eisen J.A."/>
            <person name="Heidelberg J.F."/>
            <person name="Dodson R.J."/>
            <person name="Davidsen T.M."/>
            <person name="DeBoy R.T."/>
            <person name="Fouts D.E."/>
            <person name="Haft D.H."/>
            <person name="Selengut J."/>
            <person name="Ren Q."/>
            <person name="Brinkac L.M."/>
            <person name="Madupu R."/>
            <person name="Kolonay J.F."/>
            <person name="Durkin S.A."/>
            <person name="Daugherty S.C."/>
            <person name="Shetty J."/>
            <person name="Shvartsbeyn A."/>
            <person name="Gebregeorgis E."/>
            <person name="Geer K."/>
            <person name="Tsegaye G."/>
            <person name="Malek J.A."/>
            <person name="Ayodeji B."/>
            <person name="Shatsman S."/>
            <person name="McLeod M.P."/>
            <person name="Smajs D."/>
            <person name="Howell J.K."/>
            <person name="Pal S."/>
            <person name="Amin A."/>
            <person name="Vashisth P."/>
            <person name="McNeill T.Z."/>
            <person name="Xiang Q."/>
            <person name="Sodergren E."/>
            <person name="Baca E."/>
            <person name="Weinstock G.M."/>
            <person name="Norris S.J."/>
            <person name="Fraser C.M."/>
            <person name="Paulsen I.T."/>
        </authorList>
    </citation>
    <scope>NUCLEOTIDE SEQUENCE [LARGE SCALE GENOMIC DNA]</scope>
    <source>
        <strain>ATCC 35405 / DSM 14222 / CIP 103919 / JCM 8153 / KCTC 15104</strain>
    </source>
</reference>
<sequence length="205" mass="22142">MEVQLQELVDKIKKDGVAAADEKAAEIIRAAEEKAKNIIEKAEAEAQESVKKAEAEALRFQKAAESSIDQAGRNTLISFRQGLLNELNAIIKAETAKNYDSAVLKNLIPEAVKGWVKTGNTENLSVILADKDLKELESSLSAALKDHIAKGMELKADSKIAGGFRIGTKDGSAYYDFSAEAVADLFSSYLSPKTAEILKNAAKEL</sequence>
<feature type="chain" id="PRO_0000322524" description="V-type ATP synthase subunit E">
    <location>
        <begin position="1"/>
        <end position="205"/>
    </location>
</feature>